<dbReference type="EC" id="6.3.4.4" evidence="1"/>
<dbReference type="EMBL" id="CP000612">
    <property type="protein sequence ID" value="ABO51800.1"/>
    <property type="molecule type" value="Genomic_DNA"/>
</dbReference>
<dbReference type="RefSeq" id="WP_011879585.1">
    <property type="nucleotide sequence ID" value="NC_009253.1"/>
</dbReference>
<dbReference type="SMR" id="A4J9P7"/>
<dbReference type="STRING" id="349161.Dred_3300"/>
<dbReference type="KEGG" id="drm:Dred_3300"/>
<dbReference type="eggNOG" id="COG0104">
    <property type="taxonomic scope" value="Bacteria"/>
</dbReference>
<dbReference type="HOGENOM" id="CLU_029848_0_0_9"/>
<dbReference type="OrthoDB" id="9807553at2"/>
<dbReference type="UniPathway" id="UPA00075">
    <property type="reaction ID" value="UER00335"/>
</dbReference>
<dbReference type="Proteomes" id="UP000001556">
    <property type="component" value="Chromosome"/>
</dbReference>
<dbReference type="GO" id="GO:0005737">
    <property type="term" value="C:cytoplasm"/>
    <property type="evidence" value="ECO:0007669"/>
    <property type="project" value="UniProtKB-SubCell"/>
</dbReference>
<dbReference type="GO" id="GO:0004019">
    <property type="term" value="F:adenylosuccinate synthase activity"/>
    <property type="evidence" value="ECO:0007669"/>
    <property type="project" value="UniProtKB-UniRule"/>
</dbReference>
<dbReference type="GO" id="GO:0005525">
    <property type="term" value="F:GTP binding"/>
    <property type="evidence" value="ECO:0007669"/>
    <property type="project" value="UniProtKB-UniRule"/>
</dbReference>
<dbReference type="GO" id="GO:0000287">
    <property type="term" value="F:magnesium ion binding"/>
    <property type="evidence" value="ECO:0007669"/>
    <property type="project" value="UniProtKB-UniRule"/>
</dbReference>
<dbReference type="GO" id="GO:0044208">
    <property type="term" value="P:'de novo' AMP biosynthetic process"/>
    <property type="evidence" value="ECO:0007669"/>
    <property type="project" value="UniProtKB-UniRule"/>
</dbReference>
<dbReference type="GO" id="GO:0046040">
    <property type="term" value="P:IMP metabolic process"/>
    <property type="evidence" value="ECO:0007669"/>
    <property type="project" value="TreeGrafter"/>
</dbReference>
<dbReference type="CDD" id="cd03108">
    <property type="entry name" value="AdSS"/>
    <property type="match status" value="1"/>
</dbReference>
<dbReference type="FunFam" id="1.10.300.10:FF:000001">
    <property type="entry name" value="Adenylosuccinate synthetase"/>
    <property type="match status" value="1"/>
</dbReference>
<dbReference type="FunFam" id="3.90.170.10:FF:000001">
    <property type="entry name" value="Adenylosuccinate synthetase"/>
    <property type="match status" value="1"/>
</dbReference>
<dbReference type="Gene3D" id="3.40.440.10">
    <property type="entry name" value="Adenylosuccinate Synthetase, subunit A, domain 1"/>
    <property type="match status" value="1"/>
</dbReference>
<dbReference type="Gene3D" id="1.10.300.10">
    <property type="entry name" value="Adenylosuccinate Synthetase, subunit A, domain 2"/>
    <property type="match status" value="1"/>
</dbReference>
<dbReference type="Gene3D" id="3.90.170.10">
    <property type="entry name" value="Adenylosuccinate Synthetase, subunit A, domain 3"/>
    <property type="match status" value="1"/>
</dbReference>
<dbReference type="HAMAP" id="MF_00011">
    <property type="entry name" value="Adenylosucc_synth"/>
    <property type="match status" value="1"/>
</dbReference>
<dbReference type="InterPro" id="IPR018220">
    <property type="entry name" value="Adenylosuccin_syn_GTP-bd"/>
</dbReference>
<dbReference type="InterPro" id="IPR033128">
    <property type="entry name" value="Adenylosuccin_syn_Lys_AS"/>
</dbReference>
<dbReference type="InterPro" id="IPR042109">
    <property type="entry name" value="Adenylosuccinate_synth_dom1"/>
</dbReference>
<dbReference type="InterPro" id="IPR042110">
    <property type="entry name" value="Adenylosuccinate_synth_dom2"/>
</dbReference>
<dbReference type="InterPro" id="IPR042111">
    <property type="entry name" value="Adenylosuccinate_synth_dom3"/>
</dbReference>
<dbReference type="InterPro" id="IPR001114">
    <property type="entry name" value="Adenylosuccinate_synthetase"/>
</dbReference>
<dbReference type="InterPro" id="IPR027417">
    <property type="entry name" value="P-loop_NTPase"/>
</dbReference>
<dbReference type="NCBIfam" id="NF002223">
    <property type="entry name" value="PRK01117.1"/>
    <property type="match status" value="1"/>
</dbReference>
<dbReference type="NCBIfam" id="TIGR00184">
    <property type="entry name" value="purA"/>
    <property type="match status" value="1"/>
</dbReference>
<dbReference type="PANTHER" id="PTHR11846">
    <property type="entry name" value="ADENYLOSUCCINATE SYNTHETASE"/>
    <property type="match status" value="1"/>
</dbReference>
<dbReference type="PANTHER" id="PTHR11846:SF0">
    <property type="entry name" value="ADENYLOSUCCINATE SYNTHETASE"/>
    <property type="match status" value="1"/>
</dbReference>
<dbReference type="Pfam" id="PF00709">
    <property type="entry name" value="Adenylsucc_synt"/>
    <property type="match status" value="1"/>
</dbReference>
<dbReference type="SMART" id="SM00788">
    <property type="entry name" value="Adenylsucc_synt"/>
    <property type="match status" value="1"/>
</dbReference>
<dbReference type="SUPFAM" id="SSF52540">
    <property type="entry name" value="P-loop containing nucleoside triphosphate hydrolases"/>
    <property type="match status" value="1"/>
</dbReference>
<dbReference type="PROSITE" id="PS01266">
    <property type="entry name" value="ADENYLOSUCCIN_SYN_1"/>
    <property type="match status" value="1"/>
</dbReference>
<dbReference type="PROSITE" id="PS00513">
    <property type="entry name" value="ADENYLOSUCCIN_SYN_2"/>
    <property type="match status" value="1"/>
</dbReference>
<comment type="function">
    <text evidence="1">Plays an important role in the de novo pathway of purine nucleotide biosynthesis. Catalyzes the first committed step in the biosynthesis of AMP from IMP.</text>
</comment>
<comment type="catalytic activity">
    <reaction evidence="1">
        <text>IMP + L-aspartate + GTP = N(6)-(1,2-dicarboxyethyl)-AMP + GDP + phosphate + 2 H(+)</text>
        <dbReference type="Rhea" id="RHEA:15753"/>
        <dbReference type="ChEBI" id="CHEBI:15378"/>
        <dbReference type="ChEBI" id="CHEBI:29991"/>
        <dbReference type="ChEBI" id="CHEBI:37565"/>
        <dbReference type="ChEBI" id="CHEBI:43474"/>
        <dbReference type="ChEBI" id="CHEBI:57567"/>
        <dbReference type="ChEBI" id="CHEBI:58053"/>
        <dbReference type="ChEBI" id="CHEBI:58189"/>
        <dbReference type="EC" id="6.3.4.4"/>
    </reaction>
</comment>
<comment type="cofactor">
    <cofactor evidence="1">
        <name>Mg(2+)</name>
        <dbReference type="ChEBI" id="CHEBI:18420"/>
    </cofactor>
    <text evidence="1">Binds 1 Mg(2+) ion per subunit.</text>
</comment>
<comment type="pathway">
    <text evidence="1">Purine metabolism; AMP biosynthesis via de novo pathway; AMP from IMP: step 1/2.</text>
</comment>
<comment type="subunit">
    <text evidence="1">Homodimer.</text>
</comment>
<comment type="subcellular location">
    <subcellularLocation>
        <location evidence="1">Cytoplasm</location>
    </subcellularLocation>
</comment>
<comment type="similarity">
    <text evidence="1">Belongs to the adenylosuccinate synthetase family.</text>
</comment>
<evidence type="ECO:0000255" key="1">
    <source>
        <dbReference type="HAMAP-Rule" id="MF_00011"/>
    </source>
</evidence>
<protein>
    <recommendedName>
        <fullName evidence="1">Adenylosuccinate synthetase</fullName>
        <shortName evidence="1">AMPSase</shortName>
        <shortName evidence="1">AdSS</shortName>
        <ecNumber evidence="1">6.3.4.4</ecNumber>
    </recommendedName>
    <alternativeName>
        <fullName evidence="1">IMP--aspartate ligase</fullName>
    </alternativeName>
</protein>
<keyword id="KW-0963">Cytoplasm</keyword>
<keyword id="KW-0342">GTP-binding</keyword>
<keyword id="KW-0436">Ligase</keyword>
<keyword id="KW-0460">Magnesium</keyword>
<keyword id="KW-0479">Metal-binding</keyword>
<keyword id="KW-0547">Nucleotide-binding</keyword>
<keyword id="KW-0658">Purine biosynthesis</keyword>
<keyword id="KW-1185">Reference proteome</keyword>
<feature type="chain" id="PRO_1000070939" description="Adenylosuccinate synthetase">
    <location>
        <begin position="1"/>
        <end position="428"/>
    </location>
</feature>
<feature type="active site" description="Proton acceptor" evidence="1">
    <location>
        <position position="13"/>
    </location>
</feature>
<feature type="active site" description="Proton donor" evidence="1">
    <location>
        <position position="41"/>
    </location>
</feature>
<feature type="binding site" evidence="1">
    <location>
        <begin position="12"/>
        <end position="18"/>
    </location>
    <ligand>
        <name>GTP</name>
        <dbReference type="ChEBI" id="CHEBI:37565"/>
    </ligand>
</feature>
<feature type="binding site" description="in other chain" evidence="1">
    <location>
        <begin position="13"/>
        <end position="16"/>
    </location>
    <ligand>
        <name>IMP</name>
        <dbReference type="ChEBI" id="CHEBI:58053"/>
        <note>ligand shared between dimeric partners</note>
    </ligand>
</feature>
<feature type="binding site" evidence="1">
    <location>
        <position position="13"/>
    </location>
    <ligand>
        <name>Mg(2+)</name>
        <dbReference type="ChEBI" id="CHEBI:18420"/>
    </ligand>
</feature>
<feature type="binding site" description="in other chain" evidence="1">
    <location>
        <begin position="38"/>
        <end position="41"/>
    </location>
    <ligand>
        <name>IMP</name>
        <dbReference type="ChEBI" id="CHEBI:58053"/>
        <note>ligand shared between dimeric partners</note>
    </ligand>
</feature>
<feature type="binding site" evidence="1">
    <location>
        <begin position="40"/>
        <end position="42"/>
    </location>
    <ligand>
        <name>GTP</name>
        <dbReference type="ChEBI" id="CHEBI:37565"/>
    </ligand>
</feature>
<feature type="binding site" evidence="1">
    <location>
        <position position="40"/>
    </location>
    <ligand>
        <name>Mg(2+)</name>
        <dbReference type="ChEBI" id="CHEBI:18420"/>
    </ligand>
</feature>
<feature type="binding site" description="in other chain" evidence="1">
    <location>
        <position position="128"/>
    </location>
    <ligand>
        <name>IMP</name>
        <dbReference type="ChEBI" id="CHEBI:58053"/>
        <note>ligand shared between dimeric partners</note>
    </ligand>
</feature>
<feature type="binding site" evidence="1">
    <location>
        <position position="142"/>
    </location>
    <ligand>
        <name>IMP</name>
        <dbReference type="ChEBI" id="CHEBI:58053"/>
        <note>ligand shared between dimeric partners</note>
    </ligand>
</feature>
<feature type="binding site" description="in other chain" evidence="1">
    <location>
        <position position="223"/>
    </location>
    <ligand>
        <name>IMP</name>
        <dbReference type="ChEBI" id="CHEBI:58053"/>
        <note>ligand shared between dimeric partners</note>
    </ligand>
</feature>
<feature type="binding site" description="in other chain" evidence="1">
    <location>
        <position position="238"/>
    </location>
    <ligand>
        <name>IMP</name>
        <dbReference type="ChEBI" id="CHEBI:58053"/>
        <note>ligand shared between dimeric partners</note>
    </ligand>
</feature>
<feature type="binding site" evidence="1">
    <location>
        <begin position="298"/>
        <end position="304"/>
    </location>
    <ligand>
        <name>substrate</name>
    </ligand>
</feature>
<feature type="binding site" description="in other chain" evidence="1">
    <location>
        <position position="302"/>
    </location>
    <ligand>
        <name>IMP</name>
        <dbReference type="ChEBI" id="CHEBI:58053"/>
        <note>ligand shared between dimeric partners</note>
    </ligand>
</feature>
<feature type="binding site" evidence="1">
    <location>
        <position position="304"/>
    </location>
    <ligand>
        <name>GTP</name>
        <dbReference type="ChEBI" id="CHEBI:37565"/>
    </ligand>
</feature>
<feature type="binding site" evidence="1">
    <location>
        <begin position="330"/>
        <end position="332"/>
    </location>
    <ligand>
        <name>GTP</name>
        <dbReference type="ChEBI" id="CHEBI:37565"/>
    </ligand>
</feature>
<feature type="binding site" evidence="1">
    <location>
        <begin position="412"/>
        <end position="414"/>
    </location>
    <ligand>
        <name>GTP</name>
        <dbReference type="ChEBI" id="CHEBI:37565"/>
    </ligand>
</feature>
<organism>
    <name type="scientific">Desulforamulus reducens (strain ATCC BAA-1160 / DSM 100696 / MI-1)</name>
    <name type="common">Desulfotomaculum reducens</name>
    <dbReference type="NCBI Taxonomy" id="349161"/>
    <lineage>
        <taxon>Bacteria</taxon>
        <taxon>Bacillati</taxon>
        <taxon>Bacillota</taxon>
        <taxon>Clostridia</taxon>
        <taxon>Eubacteriales</taxon>
        <taxon>Peptococcaceae</taxon>
        <taxon>Desulforamulus</taxon>
    </lineage>
</organism>
<name>PURA_DESRM</name>
<reference key="1">
    <citation type="submission" date="2007-03" db="EMBL/GenBank/DDBJ databases">
        <title>Complete sequence of Desulfotomaculum reducens MI-1.</title>
        <authorList>
            <consortium name="US DOE Joint Genome Institute"/>
            <person name="Copeland A."/>
            <person name="Lucas S."/>
            <person name="Lapidus A."/>
            <person name="Barry K."/>
            <person name="Detter J.C."/>
            <person name="Glavina del Rio T."/>
            <person name="Hammon N."/>
            <person name="Israni S."/>
            <person name="Dalin E."/>
            <person name="Tice H."/>
            <person name="Pitluck S."/>
            <person name="Sims D."/>
            <person name="Brettin T."/>
            <person name="Bruce D."/>
            <person name="Han C."/>
            <person name="Tapia R."/>
            <person name="Schmutz J."/>
            <person name="Larimer F."/>
            <person name="Land M."/>
            <person name="Hauser L."/>
            <person name="Kyrpides N."/>
            <person name="Kim E."/>
            <person name="Tebo B.M."/>
            <person name="Richardson P."/>
        </authorList>
    </citation>
    <scope>NUCLEOTIDE SEQUENCE [LARGE SCALE GENOMIC DNA]</scope>
    <source>
        <strain>ATCC BAA-1160 / DSM 100696 / MI-1</strain>
    </source>
</reference>
<proteinExistence type="inferred from homology"/>
<accession>A4J9P7</accession>
<sequence>MSTVVIIGAQWGDEGKGKITDFLAEKAEIIVRYQGGNNAGHTVVVDDAEFKLHLIPSGILHPEKLCVIGNGVVIDPQVLKQELDSLAERGVKTGRLCVSQRSHIIMPYHRKMDAVEEEQKGEGKIGTTKRGIGPTYTDKASRVGIRVVDLIDKEEFPKLLKNNIECKNEIFEKLYNTKGFEYEEVLKEYQGYAEMLEPMTEDVSVLVHNAIKEGKNVLFEGAQGTLLDLDHGTYPYVTSSHPTAAAACLGSGVGPTKINRALGIVKAYTTRVGEGPFPTELNDGLGEEIRKNGNEYGTTTGRPRRCGWFDAVIVRYAARISGLDSLAITKLDVLSGLPVIKLCSGYRYKGEIIREFPASLKELAKCEPVYEDFPGWSEDISNVTRYEDLPENAKRYLERIVELTEVKISLISVGVKRSQTIILEDLFN</sequence>
<gene>
    <name evidence="1" type="primary">purA</name>
    <name type="ordered locus">Dred_3300</name>
</gene>